<keyword id="KW-0002">3D-structure</keyword>
<keyword id="KW-0496">Mitochondrion</keyword>
<keyword id="KW-1267">Proteomics identification</keyword>
<keyword id="KW-1185">Reference proteome</keyword>
<keyword id="KW-0687">Ribonucleoprotein</keyword>
<keyword id="KW-0689">Ribosomal protein</keyword>
<protein>
    <recommendedName>
        <fullName evidence="2">Small ribosomal subunit protein uS10m</fullName>
    </recommendedName>
    <alternativeName>
        <fullName>28S ribosomal protein S10, mitochondrial</fullName>
        <shortName>MRP-S10</shortName>
        <shortName>S10mt</shortName>
    </alternativeName>
</protein>
<accession>P82664</accession>
<accession>B2RE89</accession>
<accession>Q9H3E5</accession>
<accession>Q9NVR3</accession>
<dbReference type="EMBL" id="AF113220">
    <property type="protein sequence ID" value="AAG39291.1"/>
    <property type="molecule type" value="mRNA"/>
</dbReference>
<dbReference type="EMBL" id="AK001429">
    <property type="protein sequence ID" value="BAA91686.1"/>
    <property type="molecule type" value="mRNA"/>
</dbReference>
<dbReference type="EMBL" id="AK316599">
    <property type="protein sequence ID" value="BAG38186.1"/>
    <property type="molecule type" value="mRNA"/>
</dbReference>
<dbReference type="EMBL" id="AL096814">
    <property type="status" value="NOT_ANNOTATED_CDS"/>
    <property type="molecule type" value="Genomic_DNA"/>
</dbReference>
<dbReference type="EMBL" id="CH471081">
    <property type="protein sequence ID" value="EAX04086.1"/>
    <property type="molecule type" value="Genomic_DNA"/>
</dbReference>
<dbReference type="EMBL" id="BC012560">
    <property type="protein sequence ID" value="AAH12560.1"/>
    <property type="molecule type" value="mRNA"/>
</dbReference>
<dbReference type="CCDS" id="CCDS4866.1"/>
<dbReference type="RefSeq" id="NP_060611.2">
    <property type="nucleotide sequence ID" value="NM_018141.3"/>
</dbReference>
<dbReference type="PDB" id="3J9M">
    <property type="method" value="EM"/>
    <property type="resolution" value="3.50 A"/>
    <property type="chains" value="AH=1-201"/>
</dbReference>
<dbReference type="PDB" id="6NU2">
    <property type="method" value="EM"/>
    <property type="resolution" value="3.90 A"/>
    <property type="chains" value="AH=61-182"/>
</dbReference>
<dbReference type="PDB" id="6NU3">
    <property type="method" value="EM"/>
    <property type="resolution" value="4.40 A"/>
    <property type="chains" value="AH=1-201"/>
</dbReference>
<dbReference type="PDB" id="6RW4">
    <property type="method" value="EM"/>
    <property type="resolution" value="2.97 A"/>
    <property type="chains" value="H=1-201"/>
</dbReference>
<dbReference type="PDB" id="6RW5">
    <property type="method" value="EM"/>
    <property type="resolution" value="3.14 A"/>
    <property type="chains" value="H=1-201"/>
</dbReference>
<dbReference type="PDB" id="6VLZ">
    <property type="method" value="EM"/>
    <property type="resolution" value="2.97 A"/>
    <property type="chains" value="AH=1-201"/>
</dbReference>
<dbReference type="PDB" id="6VMI">
    <property type="method" value="EM"/>
    <property type="resolution" value="2.96 A"/>
    <property type="chains" value="AH=1-201"/>
</dbReference>
<dbReference type="PDB" id="6ZM5">
    <property type="method" value="EM"/>
    <property type="resolution" value="2.89 A"/>
    <property type="chains" value="AH=1-201"/>
</dbReference>
<dbReference type="PDB" id="6ZM6">
    <property type="method" value="EM"/>
    <property type="resolution" value="2.59 A"/>
    <property type="chains" value="AH=1-201"/>
</dbReference>
<dbReference type="PDB" id="6ZS9">
    <property type="method" value="EM"/>
    <property type="resolution" value="4.00 A"/>
    <property type="chains" value="AH=1-201"/>
</dbReference>
<dbReference type="PDB" id="6ZSA">
    <property type="method" value="EM"/>
    <property type="resolution" value="4.00 A"/>
    <property type="chains" value="AH=1-201"/>
</dbReference>
<dbReference type="PDB" id="6ZSB">
    <property type="method" value="EM"/>
    <property type="resolution" value="4.50 A"/>
    <property type="chains" value="AH=1-201"/>
</dbReference>
<dbReference type="PDB" id="6ZSC">
    <property type="method" value="EM"/>
    <property type="resolution" value="3.50 A"/>
    <property type="chains" value="AH=1-201"/>
</dbReference>
<dbReference type="PDB" id="6ZSD">
    <property type="method" value="EM"/>
    <property type="resolution" value="3.70 A"/>
    <property type="chains" value="AH=1-201"/>
</dbReference>
<dbReference type="PDB" id="6ZSE">
    <property type="method" value="EM"/>
    <property type="resolution" value="5.00 A"/>
    <property type="chains" value="AH=1-201"/>
</dbReference>
<dbReference type="PDB" id="6ZSG">
    <property type="method" value="EM"/>
    <property type="resolution" value="4.00 A"/>
    <property type="chains" value="AH=1-201"/>
</dbReference>
<dbReference type="PDB" id="7A5F">
    <property type="method" value="EM"/>
    <property type="resolution" value="4.40 A"/>
    <property type="chains" value="H6=1-201"/>
</dbReference>
<dbReference type="PDB" id="7A5G">
    <property type="method" value="EM"/>
    <property type="resolution" value="4.33 A"/>
    <property type="chains" value="H6=1-201"/>
</dbReference>
<dbReference type="PDB" id="7A5I">
    <property type="method" value="EM"/>
    <property type="resolution" value="3.70 A"/>
    <property type="chains" value="H6=1-201"/>
</dbReference>
<dbReference type="PDB" id="7A5K">
    <property type="method" value="EM"/>
    <property type="resolution" value="3.70 A"/>
    <property type="chains" value="H6=1-201"/>
</dbReference>
<dbReference type="PDB" id="7L08">
    <property type="method" value="EM"/>
    <property type="resolution" value="3.49 A"/>
    <property type="chains" value="AH=1-201"/>
</dbReference>
<dbReference type="PDB" id="7OG4">
    <property type="method" value="EM"/>
    <property type="resolution" value="3.80 A"/>
    <property type="chains" value="AH=1-201"/>
</dbReference>
<dbReference type="PDB" id="7P2E">
    <property type="method" value="EM"/>
    <property type="resolution" value="2.40 A"/>
    <property type="chains" value="H=1-201"/>
</dbReference>
<dbReference type="PDB" id="7PNX">
    <property type="method" value="EM"/>
    <property type="resolution" value="2.76 A"/>
    <property type="chains" value="H=1-201"/>
</dbReference>
<dbReference type="PDB" id="7PNY">
    <property type="method" value="EM"/>
    <property type="resolution" value="3.06 A"/>
    <property type="chains" value="H=1-201"/>
</dbReference>
<dbReference type="PDB" id="7PNZ">
    <property type="method" value="EM"/>
    <property type="resolution" value="3.09 A"/>
    <property type="chains" value="H=1-201"/>
</dbReference>
<dbReference type="PDB" id="7PO0">
    <property type="method" value="EM"/>
    <property type="resolution" value="2.90 A"/>
    <property type="chains" value="H=1-201"/>
</dbReference>
<dbReference type="PDB" id="7PO1">
    <property type="method" value="EM"/>
    <property type="resolution" value="2.92 A"/>
    <property type="chains" value="H=1-201"/>
</dbReference>
<dbReference type="PDB" id="7PO2">
    <property type="method" value="EM"/>
    <property type="resolution" value="3.09 A"/>
    <property type="chains" value="H=1-201"/>
</dbReference>
<dbReference type="PDB" id="7PO3">
    <property type="method" value="EM"/>
    <property type="resolution" value="2.92 A"/>
    <property type="chains" value="H=1-201"/>
</dbReference>
<dbReference type="PDB" id="7QI4">
    <property type="method" value="EM"/>
    <property type="resolution" value="2.21 A"/>
    <property type="chains" value="AH=1-201"/>
</dbReference>
<dbReference type="PDB" id="7QI5">
    <property type="method" value="EM"/>
    <property type="resolution" value="2.63 A"/>
    <property type="chains" value="AH=1-201"/>
</dbReference>
<dbReference type="PDB" id="7QI6">
    <property type="method" value="EM"/>
    <property type="resolution" value="2.98 A"/>
    <property type="chains" value="AH=1-201"/>
</dbReference>
<dbReference type="PDB" id="8ANY">
    <property type="method" value="EM"/>
    <property type="resolution" value="2.85 A"/>
    <property type="chains" value="AH=1-201"/>
</dbReference>
<dbReference type="PDB" id="8CSP">
    <property type="method" value="EM"/>
    <property type="resolution" value="2.66 A"/>
    <property type="chains" value="H=1-201"/>
</dbReference>
<dbReference type="PDB" id="8CSQ">
    <property type="method" value="EM"/>
    <property type="resolution" value="2.54 A"/>
    <property type="chains" value="H=1-201"/>
</dbReference>
<dbReference type="PDB" id="8CSR">
    <property type="method" value="EM"/>
    <property type="resolution" value="2.54 A"/>
    <property type="chains" value="H=1-201"/>
</dbReference>
<dbReference type="PDB" id="8CSS">
    <property type="method" value="EM"/>
    <property type="resolution" value="2.36 A"/>
    <property type="chains" value="H=1-201"/>
</dbReference>
<dbReference type="PDB" id="8CST">
    <property type="method" value="EM"/>
    <property type="resolution" value="2.85 A"/>
    <property type="chains" value="H=1-201"/>
</dbReference>
<dbReference type="PDB" id="8CSU">
    <property type="method" value="EM"/>
    <property type="resolution" value="3.03 A"/>
    <property type="chains" value="H=1-201"/>
</dbReference>
<dbReference type="PDB" id="8K2A">
    <property type="method" value="EM"/>
    <property type="resolution" value="2.90 A"/>
    <property type="chains" value="SJ=1-201"/>
</dbReference>
<dbReference type="PDB" id="8OIR">
    <property type="method" value="EM"/>
    <property type="resolution" value="3.10 A"/>
    <property type="chains" value="AH=1-201"/>
</dbReference>
<dbReference type="PDB" id="8OIS">
    <property type="method" value="EM"/>
    <property type="resolution" value="3.00 A"/>
    <property type="chains" value="AH=1-201"/>
</dbReference>
<dbReference type="PDB" id="8QRK">
    <property type="method" value="EM"/>
    <property type="resolution" value="6.69 A"/>
    <property type="chains" value="H=1-201"/>
</dbReference>
<dbReference type="PDB" id="8QRL">
    <property type="method" value="EM"/>
    <property type="resolution" value="3.34 A"/>
    <property type="chains" value="H=1-201"/>
</dbReference>
<dbReference type="PDB" id="8QRM">
    <property type="method" value="EM"/>
    <property type="resolution" value="3.05 A"/>
    <property type="chains" value="H=1-201"/>
</dbReference>
<dbReference type="PDB" id="8QRN">
    <property type="method" value="EM"/>
    <property type="resolution" value="2.98 A"/>
    <property type="chains" value="H=1-201"/>
</dbReference>
<dbReference type="PDB" id="8RRI">
    <property type="method" value="EM"/>
    <property type="resolution" value="2.40 A"/>
    <property type="chains" value="AH=1-201"/>
</dbReference>
<dbReference type="PDB" id="8XT0">
    <property type="method" value="EM"/>
    <property type="resolution" value="3.20 A"/>
    <property type="chains" value="SJ=1-201"/>
</dbReference>
<dbReference type="PDB" id="8XT2">
    <property type="method" value="EM"/>
    <property type="resolution" value="3.30 A"/>
    <property type="chains" value="SJ=1-201"/>
</dbReference>
<dbReference type="PDBsum" id="3J9M"/>
<dbReference type="PDBsum" id="6NU2"/>
<dbReference type="PDBsum" id="6NU3"/>
<dbReference type="PDBsum" id="6RW4"/>
<dbReference type="PDBsum" id="6RW5"/>
<dbReference type="PDBsum" id="6VLZ"/>
<dbReference type="PDBsum" id="6VMI"/>
<dbReference type="PDBsum" id="6ZM5"/>
<dbReference type="PDBsum" id="6ZM6"/>
<dbReference type="PDBsum" id="6ZS9"/>
<dbReference type="PDBsum" id="6ZSA"/>
<dbReference type="PDBsum" id="6ZSB"/>
<dbReference type="PDBsum" id="6ZSC"/>
<dbReference type="PDBsum" id="6ZSD"/>
<dbReference type="PDBsum" id="6ZSE"/>
<dbReference type="PDBsum" id="6ZSG"/>
<dbReference type="PDBsum" id="7A5F"/>
<dbReference type="PDBsum" id="7A5G"/>
<dbReference type="PDBsum" id="7A5I"/>
<dbReference type="PDBsum" id="7A5K"/>
<dbReference type="PDBsum" id="7L08"/>
<dbReference type="PDBsum" id="7OG4"/>
<dbReference type="PDBsum" id="7P2E"/>
<dbReference type="PDBsum" id="7PNX"/>
<dbReference type="PDBsum" id="7PNY"/>
<dbReference type="PDBsum" id="7PNZ"/>
<dbReference type="PDBsum" id="7PO0"/>
<dbReference type="PDBsum" id="7PO1"/>
<dbReference type="PDBsum" id="7PO2"/>
<dbReference type="PDBsum" id="7PO3"/>
<dbReference type="PDBsum" id="7QI4"/>
<dbReference type="PDBsum" id="7QI5"/>
<dbReference type="PDBsum" id="7QI6"/>
<dbReference type="PDBsum" id="8ANY"/>
<dbReference type="PDBsum" id="8CSP"/>
<dbReference type="PDBsum" id="8CSQ"/>
<dbReference type="PDBsum" id="8CSR"/>
<dbReference type="PDBsum" id="8CSS"/>
<dbReference type="PDBsum" id="8CST"/>
<dbReference type="PDBsum" id="8CSU"/>
<dbReference type="PDBsum" id="8K2A"/>
<dbReference type="PDBsum" id="8OIR"/>
<dbReference type="PDBsum" id="8OIS"/>
<dbReference type="PDBsum" id="8QRK"/>
<dbReference type="PDBsum" id="8QRL"/>
<dbReference type="PDBsum" id="8QRM"/>
<dbReference type="PDBsum" id="8QRN"/>
<dbReference type="PDBsum" id="8RRI"/>
<dbReference type="PDBsum" id="8XT0"/>
<dbReference type="PDBsum" id="8XT2"/>
<dbReference type="EMDB" id="EMD-0514"/>
<dbReference type="EMDB" id="EMD-0515"/>
<dbReference type="EMDB" id="EMD-10021"/>
<dbReference type="EMDB" id="EMD-10022"/>
<dbReference type="EMDB" id="EMD-11278"/>
<dbReference type="EMDB" id="EMD-11279"/>
<dbReference type="EMDB" id="EMD-11390"/>
<dbReference type="EMDB" id="EMD-11391"/>
<dbReference type="EMDB" id="EMD-11392"/>
<dbReference type="EMDB" id="EMD-11393"/>
<dbReference type="EMDB" id="EMD-11394"/>
<dbReference type="EMDB" id="EMD-11395"/>
<dbReference type="EMDB" id="EMD-11397"/>
<dbReference type="EMDB" id="EMD-11641"/>
<dbReference type="EMDB" id="EMD-11642"/>
<dbReference type="EMDB" id="EMD-11644"/>
<dbReference type="EMDB" id="EMD-11646"/>
<dbReference type="EMDB" id="EMD-12877"/>
<dbReference type="EMDB" id="EMD-13170"/>
<dbReference type="EMDB" id="EMD-13555"/>
<dbReference type="EMDB" id="EMD-13556"/>
<dbReference type="EMDB" id="EMD-13557"/>
<dbReference type="EMDB" id="EMD-13558"/>
<dbReference type="EMDB" id="EMD-13559"/>
<dbReference type="EMDB" id="EMD-13560"/>
<dbReference type="EMDB" id="EMD-13561"/>
<dbReference type="EMDB" id="EMD-13980"/>
<dbReference type="EMDB" id="EMD-13981"/>
<dbReference type="EMDB" id="EMD-13982"/>
<dbReference type="EMDB" id="EMD-15544"/>
<dbReference type="EMDB" id="EMD-16897"/>
<dbReference type="EMDB" id="EMD-16898"/>
<dbReference type="EMDB" id="EMD-19460"/>
<dbReference type="EMDB" id="EMD-21233"/>
<dbReference type="EMDB" id="EMD-21242"/>
<dbReference type="EMDB" id="EMD-23096"/>
<dbReference type="EMDB" id="EMD-26966"/>
<dbReference type="EMDB" id="EMD-26967"/>
<dbReference type="EMDB" id="EMD-26968"/>
<dbReference type="EMDB" id="EMD-26969"/>
<dbReference type="EMDB" id="EMD-26970"/>
<dbReference type="EMDB" id="EMD-26971"/>
<dbReference type="EMDB" id="EMD-36836"/>
<dbReference type="EMDB" id="EMD-38632"/>
<dbReference type="EMDB" id="EMD-38634"/>
<dbReference type="SMR" id="P82664"/>
<dbReference type="BioGRID" id="120472">
    <property type="interactions" value="231"/>
</dbReference>
<dbReference type="ComplexPortal" id="CPX-5225">
    <property type="entry name" value="28S mitochondrial small ribosomal subunit"/>
</dbReference>
<dbReference type="CORUM" id="P82664"/>
<dbReference type="DIP" id="DIP-50902N"/>
<dbReference type="FunCoup" id="P82664">
    <property type="interactions" value="1511"/>
</dbReference>
<dbReference type="IntAct" id="P82664">
    <property type="interactions" value="103"/>
</dbReference>
<dbReference type="MINT" id="P82664"/>
<dbReference type="STRING" id="9606.ENSP00000053468"/>
<dbReference type="iPTMnet" id="P82664"/>
<dbReference type="PhosphoSitePlus" id="P82664"/>
<dbReference type="BioMuta" id="MRPS10"/>
<dbReference type="jPOST" id="P82664"/>
<dbReference type="MassIVE" id="P82664"/>
<dbReference type="PaxDb" id="9606-ENSP00000053468"/>
<dbReference type="PeptideAtlas" id="P82664"/>
<dbReference type="ProteomicsDB" id="57711"/>
<dbReference type="Pumba" id="P82664"/>
<dbReference type="TopDownProteomics" id="P82664"/>
<dbReference type="Antibodypedia" id="30148">
    <property type="antibodies" value="138 antibodies from 20 providers"/>
</dbReference>
<dbReference type="DNASU" id="55173"/>
<dbReference type="Ensembl" id="ENST00000053468.4">
    <property type="protein sequence ID" value="ENSP00000053468.3"/>
    <property type="gene ID" value="ENSG00000048544.7"/>
</dbReference>
<dbReference type="GeneID" id="55173"/>
<dbReference type="KEGG" id="hsa:55173"/>
<dbReference type="MANE-Select" id="ENST00000053468.4">
    <property type="protein sequence ID" value="ENSP00000053468.3"/>
    <property type="RefSeq nucleotide sequence ID" value="NM_018141.4"/>
    <property type="RefSeq protein sequence ID" value="NP_060611.2"/>
</dbReference>
<dbReference type="UCSC" id="uc003osa.5">
    <property type="organism name" value="human"/>
</dbReference>
<dbReference type="AGR" id="HGNC:14502"/>
<dbReference type="CTD" id="55173"/>
<dbReference type="DisGeNET" id="55173"/>
<dbReference type="GeneCards" id="MRPS10"/>
<dbReference type="HGNC" id="HGNC:14502">
    <property type="gene designation" value="MRPS10"/>
</dbReference>
<dbReference type="HPA" id="ENSG00000048544">
    <property type="expression patterns" value="Low tissue specificity"/>
</dbReference>
<dbReference type="MIM" id="611976">
    <property type="type" value="gene"/>
</dbReference>
<dbReference type="neXtProt" id="NX_P82664"/>
<dbReference type="OpenTargets" id="ENSG00000048544"/>
<dbReference type="PharmGKB" id="PA30993"/>
<dbReference type="VEuPathDB" id="HostDB:ENSG00000048544"/>
<dbReference type="eggNOG" id="KOG3321">
    <property type="taxonomic scope" value="Eukaryota"/>
</dbReference>
<dbReference type="GeneTree" id="ENSGT00390000009045"/>
<dbReference type="HOGENOM" id="CLU_099082_0_0_1"/>
<dbReference type="InParanoid" id="P82664"/>
<dbReference type="OMA" id="IRWVQPA"/>
<dbReference type="OrthoDB" id="366214at2759"/>
<dbReference type="PAN-GO" id="P82664">
    <property type="GO annotations" value="1 GO annotation based on evolutionary models"/>
</dbReference>
<dbReference type="PhylomeDB" id="P82664"/>
<dbReference type="TreeFam" id="TF315130"/>
<dbReference type="PathwayCommons" id="P82664"/>
<dbReference type="Reactome" id="R-HSA-5368286">
    <property type="pathway name" value="Mitochondrial translation initiation"/>
</dbReference>
<dbReference type="Reactome" id="R-HSA-5389840">
    <property type="pathway name" value="Mitochondrial translation elongation"/>
</dbReference>
<dbReference type="Reactome" id="R-HSA-5419276">
    <property type="pathway name" value="Mitochondrial translation termination"/>
</dbReference>
<dbReference type="Reactome" id="R-HSA-9837999">
    <property type="pathway name" value="Mitochondrial protein degradation"/>
</dbReference>
<dbReference type="SignaLink" id="P82664"/>
<dbReference type="SIGNOR" id="P82664"/>
<dbReference type="BioGRID-ORCS" id="55173">
    <property type="hits" value="511 hits in 1165 CRISPR screens"/>
</dbReference>
<dbReference type="ChiTaRS" id="MRPS10">
    <property type="organism name" value="human"/>
</dbReference>
<dbReference type="GenomeRNAi" id="55173"/>
<dbReference type="Pharos" id="P82664">
    <property type="development level" value="Tdark"/>
</dbReference>
<dbReference type="PRO" id="PR:P82664"/>
<dbReference type="Proteomes" id="UP000005640">
    <property type="component" value="Chromosome 6"/>
</dbReference>
<dbReference type="RNAct" id="P82664">
    <property type="molecule type" value="protein"/>
</dbReference>
<dbReference type="Bgee" id="ENSG00000048544">
    <property type="expression patterns" value="Expressed in buccal mucosa cell and 211 other cell types or tissues"/>
</dbReference>
<dbReference type="ExpressionAtlas" id="P82664">
    <property type="expression patterns" value="baseline and differential"/>
</dbReference>
<dbReference type="GO" id="GO:0005743">
    <property type="term" value="C:mitochondrial inner membrane"/>
    <property type="evidence" value="ECO:0000304"/>
    <property type="project" value="Reactome"/>
</dbReference>
<dbReference type="GO" id="GO:0005759">
    <property type="term" value="C:mitochondrial matrix"/>
    <property type="evidence" value="ECO:0000304"/>
    <property type="project" value="Reactome"/>
</dbReference>
<dbReference type="GO" id="GO:0005763">
    <property type="term" value="C:mitochondrial small ribosomal subunit"/>
    <property type="evidence" value="ECO:0000314"/>
    <property type="project" value="UniProtKB"/>
</dbReference>
<dbReference type="GO" id="GO:0005739">
    <property type="term" value="C:mitochondrion"/>
    <property type="evidence" value="ECO:0006056"/>
    <property type="project" value="FlyBase"/>
</dbReference>
<dbReference type="GO" id="GO:0032543">
    <property type="term" value="P:mitochondrial translation"/>
    <property type="evidence" value="ECO:0000303"/>
    <property type="project" value="ComplexPortal"/>
</dbReference>
<dbReference type="FunFam" id="3.30.70.600:FF:000005">
    <property type="entry name" value="28S ribosomal protein S10, mitochondrial"/>
    <property type="match status" value="1"/>
</dbReference>
<dbReference type="Gene3D" id="3.30.70.600">
    <property type="entry name" value="Ribosomal protein S10 domain"/>
    <property type="match status" value="1"/>
</dbReference>
<dbReference type="InterPro" id="IPR027486">
    <property type="entry name" value="Ribosomal_uS10_dom"/>
</dbReference>
<dbReference type="InterPro" id="IPR036838">
    <property type="entry name" value="Ribosomal_uS10_dom_sf"/>
</dbReference>
<dbReference type="InterPro" id="IPR040055">
    <property type="entry name" value="Ribosomal_uS10m"/>
</dbReference>
<dbReference type="PANTHER" id="PTHR13334">
    <property type="entry name" value="MITOCHONDRIAL 28S RIBOSOMAL PROTEIN S10"/>
    <property type="match status" value="1"/>
</dbReference>
<dbReference type="PANTHER" id="PTHR13334:SF4">
    <property type="entry name" value="SMALL RIBOSOMAL SUBUNIT PROTEIN US10M"/>
    <property type="match status" value="1"/>
</dbReference>
<dbReference type="Pfam" id="PF00338">
    <property type="entry name" value="Ribosomal_S10"/>
    <property type="match status" value="1"/>
</dbReference>
<dbReference type="SMART" id="SM01403">
    <property type="entry name" value="Ribosomal_S10"/>
    <property type="match status" value="1"/>
</dbReference>
<dbReference type="SUPFAM" id="SSF54999">
    <property type="entry name" value="Ribosomal protein S10"/>
    <property type="match status" value="1"/>
</dbReference>
<gene>
    <name type="primary">MRPS10</name>
    <name type="ORF">MSTP040</name>
</gene>
<sequence length="201" mass="22999">MAARTAFGAVCRRLWQGLGNFSVNTSKGNTAKNGGLLLSTNMKWVQFSNLHVDVPKDLTKPVVTISDEPDILYKRLSVLVKGHDKAVLDSYEYFAVLAAKELGISIKVHEPPRKIERFTLLQSVHIYKKHRVQYEMRTLYRCLELEHLTGSTADVYLEYIQRNLPEGVAMEVTKTQLEQLPEHIKEPIWETLSEEKEESKS</sequence>
<proteinExistence type="evidence at protein level"/>
<comment type="subunit">
    <text evidence="1">Component of the mitochondrial small ribosomal subunit (mt-SSU). Mature mammalian 55S mitochondrial ribosomes consist of a small (28S) and a large (39S) subunit. The 28S small subunit contains a 12S ribosomal RNA (12S mt-rRNA) and 30 different proteins. The 39S large subunit contains a 16S rRNA (16S mt-rRNA), a copy of mitochondrial valine transfer RNA (mt-tRNA(Val)), which plays an integral structural role, and 52 different proteins.</text>
</comment>
<comment type="subcellular location">
    <subcellularLocation>
        <location evidence="1">Mitochondrion</location>
    </subcellularLocation>
</comment>
<comment type="similarity">
    <text evidence="3">Belongs to the universal ribosomal protein uS10 family.</text>
</comment>
<reference key="1">
    <citation type="submission" date="1998-12" db="EMBL/GenBank/DDBJ databases">
        <authorList>
            <person name="Liu B."/>
            <person name="Liu Y.Q."/>
            <person name="Wang X.Y."/>
            <person name="Zhao B."/>
            <person name="Sheng H."/>
            <person name="Zhao X.W."/>
            <person name="Liu S."/>
            <person name="Xu Y.Y."/>
            <person name="Ye J."/>
            <person name="Song L."/>
            <person name="Gao Y."/>
            <person name="Zhang C.L."/>
            <person name="Zhang J."/>
            <person name="Wei Y.J."/>
            <person name="Cao H.Q."/>
            <person name="Zhao Y."/>
            <person name="Liu L.S."/>
            <person name="Ding J.F."/>
            <person name="Gao R.L."/>
            <person name="Wu Q.Y."/>
            <person name="Qiang B.Q."/>
            <person name="Yuan J.G."/>
            <person name="Liew C.C."/>
            <person name="Zhao M.S."/>
            <person name="Hui R.T."/>
        </authorList>
    </citation>
    <scope>NUCLEOTIDE SEQUENCE [LARGE SCALE MRNA]</scope>
    <source>
        <tissue>Heart</tissue>
    </source>
</reference>
<reference key="2">
    <citation type="journal article" date="2004" name="Nat. Genet.">
        <title>Complete sequencing and characterization of 21,243 full-length human cDNAs.</title>
        <authorList>
            <person name="Ota T."/>
            <person name="Suzuki Y."/>
            <person name="Nishikawa T."/>
            <person name="Otsuki T."/>
            <person name="Sugiyama T."/>
            <person name="Irie R."/>
            <person name="Wakamatsu A."/>
            <person name="Hayashi K."/>
            <person name="Sato H."/>
            <person name="Nagai K."/>
            <person name="Kimura K."/>
            <person name="Makita H."/>
            <person name="Sekine M."/>
            <person name="Obayashi M."/>
            <person name="Nishi T."/>
            <person name="Shibahara T."/>
            <person name="Tanaka T."/>
            <person name="Ishii S."/>
            <person name="Yamamoto J."/>
            <person name="Saito K."/>
            <person name="Kawai Y."/>
            <person name="Isono Y."/>
            <person name="Nakamura Y."/>
            <person name="Nagahari K."/>
            <person name="Murakami K."/>
            <person name="Yasuda T."/>
            <person name="Iwayanagi T."/>
            <person name="Wagatsuma M."/>
            <person name="Shiratori A."/>
            <person name="Sudo H."/>
            <person name="Hosoiri T."/>
            <person name="Kaku Y."/>
            <person name="Kodaira H."/>
            <person name="Kondo H."/>
            <person name="Sugawara M."/>
            <person name="Takahashi M."/>
            <person name="Kanda K."/>
            <person name="Yokoi T."/>
            <person name="Furuya T."/>
            <person name="Kikkawa E."/>
            <person name="Omura Y."/>
            <person name="Abe K."/>
            <person name="Kamihara K."/>
            <person name="Katsuta N."/>
            <person name="Sato K."/>
            <person name="Tanikawa M."/>
            <person name="Yamazaki M."/>
            <person name="Ninomiya K."/>
            <person name="Ishibashi T."/>
            <person name="Yamashita H."/>
            <person name="Murakawa K."/>
            <person name="Fujimori K."/>
            <person name="Tanai H."/>
            <person name="Kimata M."/>
            <person name="Watanabe M."/>
            <person name="Hiraoka S."/>
            <person name="Chiba Y."/>
            <person name="Ishida S."/>
            <person name="Ono Y."/>
            <person name="Takiguchi S."/>
            <person name="Watanabe S."/>
            <person name="Yosida M."/>
            <person name="Hotuta T."/>
            <person name="Kusano J."/>
            <person name="Kanehori K."/>
            <person name="Takahashi-Fujii A."/>
            <person name="Hara H."/>
            <person name="Tanase T.-O."/>
            <person name="Nomura Y."/>
            <person name="Togiya S."/>
            <person name="Komai F."/>
            <person name="Hara R."/>
            <person name="Takeuchi K."/>
            <person name="Arita M."/>
            <person name="Imose N."/>
            <person name="Musashino K."/>
            <person name="Yuuki H."/>
            <person name="Oshima A."/>
            <person name="Sasaki N."/>
            <person name="Aotsuka S."/>
            <person name="Yoshikawa Y."/>
            <person name="Matsunawa H."/>
            <person name="Ichihara T."/>
            <person name="Shiohata N."/>
            <person name="Sano S."/>
            <person name="Moriya S."/>
            <person name="Momiyama H."/>
            <person name="Satoh N."/>
            <person name="Takami S."/>
            <person name="Terashima Y."/>
            <person name="Suzuki O."/>
            <person name="Nakagawa S."/>
            <person name="Senoh A."/>
            <person name="Mizoguchi H."/>
            <person name="Goto Y."/>
            <person name="Shimizu F."/>
            <person name="Wakebe H."/>
            <person name="Hishigaki H."/>
            <person name="Watanabe T."/>
            <person name="Sugiyama A."/>
            <person name="Takemoto M."/>
            <person name="Kawakami B."/>
            <person name="Yamazaki M."/>
            <person name="Watanabe K."/>
            <person name="Kumagai A."/>
            <person name="Itakura S."/>
            <person name="Fukuzumi Y."/>
            <person name="Fujimori Y."/>
            <person name="Komiyama M."/>
            <person name="Tashiro H."/>
            <person name="Tanigami A."/>
            <person name="Fujiwara T."/>
            <person name="Ono T."/>
            <person name="Yamada K."/>
            <person name="Fujii Y."/>
            <person name="Ozaki K."/>
            <person name="Hirao M."/>
            <person name="Ohmori Y."/>
            <person name="Kawabata A."/>
            <person name="Hikiji T."/>
            <person name="Kobatake N."/>
            <person name="Inagaki H."/>
            <person name="Ikema Y."/>
            <person name="Okamoto S."/>
            <person name="Okitani R."/>
            <person name="Kawakami T."/>
            <person name="Noguchi S."/>
            <person name="Itoh T."/>
            <person name="Shigeta K."/>
            <person name="Senba T."/>
            <person name="Matsumura K."/>
            <person name="Nakajima Y."/>
            <person name="Mizuno T."/>
            <person name="Morinaga M."/>
            <person name="Sasaki M."/>
            <person name="Togashi T."/>
            <person name="Oyama M."/>
            <person name="Hata H."/>
            <person name="Watanabe M."/>
            <person name="Komatsu T."/>
            <person name="Mizushima-Sugano J."/>
            <person name="Satoh T."/>
            <person name="Shirai Y."/>
            <person name="Takahashi Y."/>
            <person name="Nakagawa K."/>
            <person name="Okumura K."/>
            <person name="Nagase T."/>
            <person name="Nomura N."/>
            <person name="Kikuchi H."/>
            <person name="Masuho Y."/>
            <person name="Yamashita R."/>
            <person name="Nakai K."/>
            <person name="Yada T."/>
            <person name="Nakamura Y."/>
            <person name="Ohara O."/>
            <person name="Isogai T."/>
            <person name="Sugano S."/>
        </authorList>
    </citation>
    <scope>NUCLEOTIDE SEQUENCE [LARGE SCALE MRNA]</scope>
    <source>
        <tissue>Heart</tissue>
    </source>
</reference>
<reference key="3">
    <citation type="journal article" date="2003" name="Nature">
        <title>The DNA sequence and analysis of human chromosome 6.</title>
        <authorList>
            <person name="Mungall A.J."/>
            <person name="Palmer S.A."/>
            <person name="Sims S.K."/>
            <person name="Edwards C.A."/>
            <person name="Ashurst J.L."/>
            <person name="Wilming L."/>
            <person name="Jones M.C."/>
            <person name="Horton R."/>
            <person name="Hunt S.E."/>
            <person name="Scott C.E."/>
            <person name="Gilbert J.G.R."/>
            <person name="Clamp M.E."/>
            <person name="Bethel G."/>
            <person name="Milne S."/>
            <person name="Ainscough R."/>
            <person name="Almeida J.P."/>
            <person name="Ambrose K.D."/>
            <person name="Andrews T.D."/>
            <person name="Ashwell R.I.S."/>
            <person name="Babbage A.K."/>
            <person name="Bagguley C.L."/>
            <person name="Bailey J."/>
            <person name="Banerjee R."/>
            <person name="Barker D.J."/>
            <person name="Barlow K.F."/>
            <person name="Bates K."/>
            <person name="Beare D.M."/>
            <person name="Beasley H."/>
            <person name="Beasley O."/>
            <person name="Bird C.P."/>
            <person name="Blakey S.E."/>
            <person name="Bray-Allen S."/>
            <person name="Brook J."/>
            <person name="Brown A.J."/>
            <person name="Brown J.Y."/>
            <person name="Burford D.C."/>
            <person name="Burrill W."/>
            <person name="Burton J."/>
            <person name="Carder C."/>
            <person name="Carter N.P."/>
            <person name="Chapman J.C."/>
            <person name="Clark S.Y."/>
            <person name="Clark G."/>
            <person name="Clee C.M."/>
            <person name="Clegg S."/>
            <person name="Cobley V."/>
            <person name="Collier R.E."/>
            <person name="Collins J.E."/>
            <person name="Colman L.K."/>
            <person name="Corby N.R."/>
            <person name="Coville G.J."/>
            <person name="Culley K.M."/>
            <person name="Dhami P."/>
            <person name="Davies J."/>
            <person name="Dunn M."/>
            <person name="Earthrowl M.E."/>
            <person name="Ellington A.E."/>
            <person name="Evans K.A."/>
            <person name="Faulkner L."/>
            <person name="Francis M.D."/>
            <person name="Frankish A."/>
            <person name="Frankland J."/>
            <person name="French L."/>
            <person name="Garner P."/>
            <person name="Garnett J."/>
            <person name="Ghori M.J."/>
            <person name="Gilby L.M."/>
            <person name="Gillson C.J."/>
            <person name="Glithero R.J."/>
            <person name="Grafham D.V."/>
            <person name="Grant M."/>
            <person name="Gribble S."/>
            <person name="Griffiths C."/>
            <person name="Griffiths M.N.D."/>
            <person name="Hall R."/>
            <person name="Halls K.S."/>
            <person name="Hammond S."/>
            <person name="Harley J.L."/>
            <person name="Hart E.A."/>
            <person name="Heath P.D."/>
            <person name="Heathcott R."/>
            <person name="Holmes S.J."/>
            <person name="Howden P.J."/>
            <person name="Howe K.L."/>
            <person name="Howell G.R."/>
            <person name="Huckle E."/>
            <person name="Humphray S.J."/>
            <person name="Humphries M.D."/>
            <person name="Hunt A.R."/>
            <person name="Johnson C.M."/>
            <person name="Joy A.A."/>
            <person name="Kay M."/>
            <person name="Keenan S.J."/>
            <person name="Kimberley A.M."/>
            <person name="King A."/>
            <person name="Laird G.K."/>
            <person name="Langford C."/>
            <person name="Lawlor S."/>
            <person name="Leongamornlert D.A."/>
            <person name="Leversha M."/>
            <person name="Lloyd C.R."/>
            <person name="Lloyd D.M."/>
            <person name="Loveland J.E."/>
            <person name="Lovell J."/>
            <person name="Martin S."/>
            <person name="Mashreghi-Mohammadi M."/>
            <person name="Maslen G.L."/>
            <person name="Matthews L."/>
            <person name="McCann O.T."/>
            <person name="McLaren S.J."/>
            <person name="McLay K."/>
            <person name="McMurray A."/>
            <person name="Moore M.J.F."/>
            <person name="Mullikin J.C."/>
            <person name="Niblett D."/>
            <person name="Nickerson T."/>
            <person name="Novik K.L."/>
            <person name="Oliver K."/>
            <person name="Overton-Larty E.K."/>
            <person name="Parker A."/>
            <person name="Patel R."/>
            <person name="Pearce A.V."/>
            <person name="Peck A.I."/>
            <person name="Phillimore B.J.C.T."/>
            <person name="Phillips S."/>
            <person name="Plumb R.W."/>
            <person name="Porter K.M."/>
            <person name="Ramsey Y."/>
            <person name="Ranby S.A."/>
            <person name="Rice C.M."/>
            <person name="Ross M.T."/>
            <person name="Searle S.M."/>
            <person name="Sehra H.K."/>
            <person name="Sheridan E."/>
            <person name="Skuce C.D."/>
            <person name="Smith S."/>
            <person name="Smith M."/>
            <person name="Spraggon L."/>
            <person name="Squares S.L."/>
            <person name="Steward C.A."/>
            <person name="Sycamore N."/>
            <person name="Tamlyn-Hall G."/>
            <person name="Tester J."/>
            <person name="Theaker A.J."/>
            <person name="Thomas D.W."/>
            <person name="Thorpe A."/>
            <person name="Tracey A."/>
            <person name="Tromans A."/>
            <person name="Tubby B."/>
            <person name="Wall M."/>
            <person name="Wallis J.M."/>
            <person name="West A.P."/>
            <person name="White S.S."/>
            <person name="Whitehead S.L."/>
            <person name="Whittaker H."/>
            <person name="Wild A."/>
            <person name="Willey D.J."/>
            <person name="Wilmer T.E."/>
            <person name="Wood J.M."/>
            <person name="Wray P.W."/>
            <person name="Wyatt J.C."/>
            <person name="Young L."/>
            <person name="Younger R.M."/>
            <person name="Bentley D.R."/>
            <person name="Coulson A."/>
            <person name="Durbin R.M."/>
            <person name="Hubbard T."/>
            <person name="Sulston J.E."/>
            <person name="Dunham I."/>
            <person name="Rogers J."/>
            <person name="Beck S."/>
        </authorList>
    </citation>
    <scope>NUCLEOTIDE SEQUENCE [LARGE SCALE GENOMIC DNA]</scope>
</reference>
<reference key="4">
    <citation type="submission" date="2005-07" db="EMBL/GenBank/DDBJ databases">
        <authorList>
            <person name="Mural R.J."/>
            <person name="Istrail S."/>
            <person name="Sutton G.G."/>
            <person name="Florea L."/>
            <person name="Halpern A.L."/>
            <person name="Mobarry C.M."/>
            <person name="Lippert R."/>
            <person name="Walenz B."/>
            <person name="Shatkay H."/>
            <person name="Dew I."/>
            <person name="Miller J.R."/>
            <person name="Flanigan M.J."/>
            <person name="Edwards N.J."/>
            <person name="Bolanos R."/>
            <person name="Fasulo D."/>
            <person name="Halldorsson B.V."/>
            <person name="Hannenhalli S."/>
            <person name="Turner R."/>
            <person name="Yooseph S."/>
            <person name="Lu F."/>
            <person name="Nusskern D.R."/>
            <person name="Shue B.C."/>
            <person name="Zheng X.H."/>
            <person name="Zhong F."/>
            <person name="Delcher A.L."/>
            <person name="Huson D.H."/>
            <person name="Kravitz S.A."/>
            <person name="Mouchard L."/>
            <person name="Reinert K."/>
            <person name="Remington K.A."/>
            <person name="Clark A.G."/>
            <person name="Waterman M.S."/>
            <person name="Eichler E.E."/>
            <person name="Adams M.D."/>
            <person name="Hunkapiller M.W."/>
            <person name="Myers E.W."/>
            <person name="Venter J.C."/>
        </authorList>
    </citation>
    <scope>NUCLEOTIDE SEQUENCE [LARGE SCALE GENOMIC DNA]</scope>
</reference>
<reference key="5">
    <citation type="journal article" date="2004" name="Genome Res.">
        <title>The status, quality, and expansion of the NIH full-length cDNA project: the Mammalian Gene Collection (MGC).</title>
        <authorList>
            <consortium name="The MGC Project Team"/>
        </authorList>
    </citation>
    <scope>NUCLEOTIDE SEQUENCE [LARGE SCALE MRNA]</scope>
    <source>
        <tissue>Brain</tissue>
    </source>
</reference>
<reference key="6">
    <citation type="journal article" date="2000" name="J. Biol. Chem.">
        <title>A proteomics approach to the identification of mammalian mitochondrial small subunit ribosomal proteins.</title>
        <authorList>
            <person name="Koc E.C."/>
            <person name="Burkhart W."/>
            <person name="Blackburn K."/>
            <person name="Moseley A."/>
            <person name="Koc H."/>
            <person name="Spremulli L.L."/>
        </authorList>
    </citation>
    <scope>IDENTIFICATION</scope>
</reference>
<reference key="7">
    <citation type="journal article" date="2011" name="BMC Syst. Biol.">
        <title>Initial characterization of the human central proteome.</title>
        <authorList>
            <person name="Burkard T.R."/>
            <person name="Planyavsky M."/>
            <person name="Kaupe I."/>
            <person name="Breitwieser F.P."/>
            <person name="Buerckstuemmer T."/>
            <person name="Bennett K.L."/>
            <person name="Superti-Furga G."/>
            <person name="Colinge J."/>
        </authorList>
    </citation>
    <scope>IDENTIFICATION BY MASS SPECTROMETRY [LARGE SCALE ANALYSIS]</scope>
</reference>
<reference evidence="4" key="8">
    <citation type="journal article" date="2015" name="Science">
        <title>Ribosome. The structure of the human mitochondrial ribosome.</title>
        <authorList>
            <person name="Amunts A."/>
            <person name="Brown A."/>
            <person name="Toots J."/>
            <person name="Scheres S.H."/>
            <person name="Ramakrishnan V."/>
        </authorList>
    </citation>
    <scope>STRUCTURE BY ELECTRON MICROSCOPY (3.50 ANGSTROMS)</scope>
    <scope>SUBCELLULAR LOCATION</scope>
    <scope>SUBUNIT</scope>
</reference>
<evidence type="ECO:0000269" key="1">
    <source>
    </source>
</evidence>
<evidence type="ECO:0000303" key="2">
    <source>
    </source>
</evidence>
<evidence type="ECO:0000305" key="3"/>
<evidence type="ECO:0007744" key="4">
    <source>
        <dbReference type="PDB" id="3J9M"/>
    </source>
</evidence>
<evidence type="ECO:0007829" key="5">
    <source>
        <dbReference type="PDB" id="8CSS"/>
    </source>
</evidence>
<feature type="chain" id="PRO_0000146675" description="Small ribosomal subunit protein uS10m">
    <location>
        <begin position="1"/>
        <end position="201"/>
    </location>
</feature>
<feature type="sequence conflict" description="In Ref. 2; BAA91686." evidence="3" ref="2">
    <original>V</original>
    <variation>A</variation>
    <location>
        <position position="63"/>
    </location>
</feature>
<feature type="strand" evidence="5">
    <location>
        <begin position="63"/>
        <end position="69"/>
    </location>
</feature>
<feature type="strand" evidence="5">
    <location>
        <begin position="72"/>
        <end position="83"/>
    </location>
</feature>
<feature type="helix" evidence="5">
    <location>
        <begin position="85"/>
        <end position="101"/>
    </location>
</feature>
<feature type="strand" evidence="5">
    <location>
        <begin position="105"/>
        <end position="109"/>
    </location>
</feature>
<feature type="strand" evidence="5">
    <location>
        <begin position="114"/>
        <end position="119"/>
    </location>
</feature>
<feature type="strand" evidence="5">
    <location>
        <begin position="133"/>
        <end position="149"/>
    </location>
</feature>
<feature type="helix" evidence="5">
    <location>
        <begin position="150"/>
        <end position="162"/>
    </location>
</feature>
<feature type="strand" evidence="5">
    <location>
        <begin position="169"/>
        <end position="178"/>
    </location>
</feature>
<feature type="helix" evidence="5">
    <location>
        <begin position="182"/>
        <end position="184"/>
    </location>
</feature>
<name>RT10_HUMAN</name>
<organism>
    <name type="scientific">Homo sapiens</name>
    <name type="common">Human</name>
    <dbReference type="NCBI Taxonomy" id="9606"/>
    <lineage>
        <taxon>Eukaryota</taxon>
        <taxon>Metazoa</taxon>
        <taxon>Chordata</taxon>
        <taxon>Craniata</taxon>
        <taxon>Vertebrata</taxon>
        <taxon>Euteleostomi</taxon>
        <taxon>Mammalia</taxon>
        <taxon>Eutheria</taxon>
        <taxon>Euarchontoglires</taxon>
        <taxon>Primates</taxon>
        <taxon>Haplorrhini</taxon>
        <taxon>Catarrhini</taxon>
        <taxon>Hominidae</taxon>
        <taxon>Homo</taxon>
    </lineage>
</organism>